<gene>
    <name evidence="1" type="primary">nusB</name>
    <name type="ordered locus">Sare_1843</name>
</gene>
<comment type="function">
    <text evidence="1">Involved in transcription antitermination. Required for transcription of ribosomal RNA (rRNA) genes. Binds specifically to the boxA antiterminator sequence of the ribosomal RNA (rrn) operons.</text>
</comment>
<comment type="similarity">
    <text evidence="1">Belongs to the NusB family.</text>
</comment>
<sequence>MPARRKARKRALDVLFEADLRDRPPVEVLAGYVERLEKPRPEHLGYAVGLVEGIAVHLDRLDELIASYAEGWTLDRMPAVDRNLARIAVYELLYVDEIDDAVAISEAVELARQMSTDDSPRFLNGILGRIAEYATR</sequence>
<dbReference type="EMBL" id="CP000850">
    <property type="protein sequence ID" value="ABV97728.1"/>
    <property type="molecule type" value="Genomic_DNA"/>
</dbReference>
<dbReference type="SMR" id="A8LY11"/>
<dbReference type="STRING" id="391037.Sare_1843"/>
<dbReference type="KEGG" id="saq:Sare_1843"/>
<dbReference type="eggNOG" id="COG0781">
    <property type="taxonomic scope" value="Bacteria"/>
</dbReference>
<dbReference type="HOGENOM" id="CLU_087843_2_3_11"/>
<dbReference type="GO" id="GO:0005829">
    <property type="term" value="C:cytosol"/>
    <property type="evidence" value="ECO:0007669"/>
    <property type="project" value="TreeGrafter"/>
</dbReference>
<dbReference type="GO" id="GO:0003723">
    <property type="term" value="F:RNA binding"/>
    <property type="evidence" value="ECO:0007669"/>
    <property type="project" value="UniProtKB-UniRule"/>
</dbReference>
<dbReference type="GO" id="GO:0006353">
    <property type="term" value="P:DNA-templated transcription termination"/>
    <property type="evidence" value="ECO:0007669"/>
    <property type="project" value="UniProtKB-UniRule"/>
</dbReference>
<dbReference type="GO" id="GO:0031564">
    <property type="term" value="P:transcription antitermination"/>
    <property type="evidence" value="ECO:0007669"/>
    <property type="project" value="UniProtKB-KW"/>
</dbReference>
<dbReference type="Gene3D" id="1.10.940.10">
    <property type="entry name" value="NusB-like"/>
    <property type="match status" value="1"/>
</dbReference>
<dbReference type="HAMAP" id="MF_00073">
    <property type="entry name" value="NusB"/>
    <property type="match status" value="1"/>
</dbReference>
<dbReference type="InterPro" id="IPR035926">
    <property type="entry name" value="NusB-like_sf"/>
</dbReference>
<dbReference type="InterPro" id="IPR011605">
    <property type="entry name" value="NusB_fam"/>
</dbReference>
<dbReference type="InterPro" id="IPR006027">
    <property type="entry name" value="NusB_RsmB_TIM44"/>
</dbReference>
<dbReference type="NCBIfam" id="TIGR01951">
    <property type="entry name" value="nusB"/>
    <property type="match status" value="1"/>
</dbReference>
<dbReference type="PANTHER" id="PTHR11078:SF3">
    <property type="entry name" value="ANTITERMINATION NUSB DOMAIN-CONTAINING PROTEIN"/>
    <property type="match status" value="1"/>
</dbReference>
<dbReference type="PANTHER" id="PTHR11078">
    <property type="entry name" value="N UTILIZATION SUBSTANCE PROTEIN B-RELATED"/>
    <property type="match status" value="1"/>
</dbReference>
<dbReference type="Pfam" id="PF01029">
    <property type="entry name" value="NusB"/>
    <property type="match status" value="1"/>
</dbReference>
<dbReference type="SUPFAM" id="SSF48013">
    <property type="entry name" value="NusB-like"/>
    <property type="match status" value="1"/>
</dbReference>
<evidence type="ECO:0000255" key="1">
    <source>
        <dbReference type="HAMAP-Rule" id="MF_00073"/>
    </source>
</evidence>
<accession>A8LY11</accession>
<name>NUSB_SALAI</name>
<feature type="chain" id="PRO_1000075199" description="Transcription antitermination protein NusB">
    <location>
        <begin position="1"/>
        <end position="136"/>
    </location>
</feature>
<organism>
    <name type="scientific">Salinispora arenicola (strain CNS-205)</name>
    <dbReference type="NCBI Taxonomy" id="391037"/>
    <lineage>
        <taxon>Bacteria</taxon>
        <taxon>Bacillati</taxon>
        <taxon>Actinomycetota</taxon>
        <taxon>Actinomycetes</taxon>
        <taxon>Micromonosporales</taxon>
        <taxon>Micromonosporaceae</taxon>
        <taxon>Salinispora</taxon>
    </lineage>
</organism>
<proteinExistence type="inferred from homology"/>
<keyword id="KW-0694">RNA-binding</keyword>
<keyword id="KW-0804">Transcription</keyword>
<keyword id="KW-0889">Transcription antitermination</keyword>
<keyword id="KW-0805">Transcription regulation</keyword>
<protein>
    <recommendedName>
        <fullName evidence="1">Transcription antitermination protein NusB</fullName>
    </recommendedName>
    <alternativeName>
        <fullName evidence="1">Antitermination factor NusB</fullName>
    </alternativeName>
</protein>
<reference key="1">
    <citation type="submission" date="2007-10" db="EMBL/GenBank/DDBJ databases">
        <title>Complete sequence of Salinispora arenicola CNS-205.</title>
        <authorList>
            <consortium name="US DOE Joint Genome Institute"/>
            <person name="Copeland A."/>
            <person name="Lucas S."/>
            <person name="Lapidus A."/>
            <person name="Barry K."/>
            <person name="Glavina del Rio T."/>
            <person name="Dalin E."/>
            <person name="Tice H."/>
            <person name="Pitluck S."/>
            <person name="Foster B."/>
            <person name="Schmutz J."/>
            <person name="Larimer F."/>
            <person name="Land M."/>
            <person name="Hauser L."/>
            <person name="Kyrpides N."/>
            <person name="Ivanova N."/>
            <person name="Jensen P.R."/>
            <person name="Moore B.S."/>
            <person name="Penn K."/>
            <person name="Jenkins C."/>
            <person name="Udwary D."/>
            <person name="Xiang L."/>
            <person name="Gontang E."/>
            <person name="Richardson P."/>
        </authorList>
    </citation>
    <scope>NUCLEOTIDE SEQUENCE [LARGE SCALE GENOMIC DNA]</scope>
    <source>
        <strain>CNS-205</strain>
    </source>
</reference>